<dbReference type="EC" id="2.7.7.60" evidence="1"/>
<dbReference type="EC" id="4.6.1.12" evidence="1"/>
<dbReference type="EMBL" id="CP000527">
    <property type="protein sequence ID" value="ABM28642.1"/>
    <property type="molecule type" value="Genomic_DNA"/>
</dbReference>
<dbReference type="SMR" id="A1VDX6"/>
<dbReference type="KEGG" id="dvl:Dvul_1625"/>
<dbReference type="HOGENOM" id="CLU_042800_1_0_7"/>
<dbReference type="UniPathway" id="UPA00056">
    <property type="reaction ID" value="UER00093"/>
</dbReference>
<dbReference type="UniPathway" id="UPA00056">
    <property type="reaction ID" value="UER00095"/>
</dbReference>
<dbReference type="Proteomes" id="UP000009173">
    <property type="component" value="Chromosome"/>
</dbReference>
<dbReference type="GO" id="GO:0008685">
    <property type="term" value="F:2-C-methyl-D-erythritol 2,4-cyclodiphosphate synthase activity"/>
    <property type="evidence" value="ECO:0007669"/>
    <property type="project" value="UniProtKB-UniRule"/>
</dbReference>
<dbReference type="GO" id="GO:0050518">
    <property type="term" value="F:2-C-methyl-D-erythritol 4-phosphate cytidylyltransferase activity"/>
    <property type="evidence" value="ECO:0007669"/>
    <property type="project" value="UniProtKB-UniRule"/>
</dbReference>
<dbReference type="GO" id="GO:0046872">
    <property type="term" value="F:metal ion binding"/>
    <property type="evidence" value="ECO:0007669"/>
    <property type="project" value="UniProtKB-KW"/>
</dbReference>
<dbReference type="GO" id="GO:0019288">
    <property type="term" value="P:isopentenyl diphosphate biosynthetic process, methylerythritol 4-phosphate pathway"/>
    <property type="evidence" value="ECO:0007669"/>
    <property type="project" value="UniProtKB-UniRule"/>
</dbReference>
<dbReference type="GO" id="GO:0016114">
    <property type="term" value="P:terpenoid biosynthetic process"/>
    <property type="evidence" value="ECO:0007669"/>
    <property type="project" value="InterPro"/>
</dbReference>
<dbReference type="CDD" id="cd02516">
    <property type="entry name" value="CDP-ME_synthetase"/>
    <property type="match status" value="1"/>
</dbReference>
<dbReference type="CDD" id="cd00554">
    <property type="entry name" value="MECDP_synthase"/>
    <property type="match status" value="1"/>
</dbReference>
<dbReference type="FunFam" id="3.90.550.10:FF:000003">
    <property type="entry name" value="2-C-methyl-D-erythritol 4-phosphate cytidylyltransferase"/>
    <property type="match status" value="1"/>
</dbReference>
<dbReference type="Gene3D" id="3.30.1330.50">
    <property type="entry name" value="2-C-methyl-D-erythritol 2,4-cyclodiphosphate synthase"/>
    <property type="match status" value="1"/>
</dbReference>
<dbReference type="Gene3D" id="3.90.550.10">
    <property type="entry name" value="Spore Coat Polysaccharide Biosynthesis Protein SpsA, Chain A"/>
    <property type="match status" value="1"/>
</dbReference>
<dbReference type="HAMAP" id="MF_00108">
    <property type="entry name" value="IspD"/>
    <property type="match status" value="1"/>
</dbReference>
<dbReference type="HAMAP" id="MF_01520">
    <property type="entry name" value="IspDF"/>
    <property type="match status" value="1"/>
</dbReference>
<dbReference type="HAMAP" id="MF_00107">
    <property type="entry name" value="IspF"/>
    <property type="match status" value="1"/>
</dbReference>
<dbReference type="InterPro" id="IPR001228">
    <property type="entry name" value="IspD"/>
</dbReference>
<dbReference type="InterPro" id="IPR026596">
    <property type="entry name" value="IspD/F"/>
</dbReference>
<dbReference type="InterPro" id="IPR034683">
    <property type="entry name" value="IspD/TarI"/>
</dbReference>
<dbReference type="InterPro" id="IPR018294">
    <property type="entry name" value="ISPD_synthase_CS"/>
</dbReference>
<dbReference type="InterPro" id="IPR003526">
    <property type="entry name" value="MECDP_synthase"/>
</dbReference>
<dbReference type="InterPro" id="IPR020555">
    <property type="entry name" value="MECDP_synthase_CS"/>
</dbReference>
<dbReference type="InterPro" id="IPR036571">
    <property type="entry name" value="MECDP_synthase_sf"/>
</dbReference>
<dbReference type="InterPro" id="IPR029044">
    <property type="entry name" value="Nucleotide-diphossugar_trans"/>
</dbReference>
<dbReference type="NCBIfam" id="TIGR00453">
    <property type="entry name" value="ispD"/>
    <property type="match status" value="1"/>
</dbReference>
<dbReference type="NCBIfam" id="TIGR00151">
    <property type="entry name" value="ispF"/>
    <property type="match status" value="1"/>
</dbReference>
<dbReference type="PANTHER" id="PTHR43181">
    <property type="entry name" value="2-C-METHYL-D-ERYTHRITOL 2,4-CYCLODIPHOSPHATE SYNTHASE, CHLOROPLASTIC"/>
    <property type="match status" value="1"/>
</dbReference>
<dbReference type="PANTHER" id="PTHR43181:SF1">
    <property type="entry name" value="2-C-METHYL-D-ERYTHRITOL 2,4-CYCLODIPHOSPHATE SYNTHASE, CHLOROPLASTIC"/>
    <property type="match status" value="1"/>
</dbReference>
<dbReference type="Pfam" id="PF01128">
    <property type="entry name" value="IspD"/>
    <property type="match status" value="1"/>
</dbReference>
<dbReference type="Pfam" id="PF02542">
    <property type="entry name" value="YgbB"/>
    <property type="match status" value="1"/>
</dbReference>
<dbReference type="SUPFAM" id="SSF69765">
    <property type="entry name" value="IpsF-like"/>
    <property type="match status" value="1"/>
</dbReference>
<dbReference type="SUPFAM" id="SSF53448">
    <property type="entry name" value="Nucleotide-diphospho-sugar transferases"/>
    <property type="match status" value="1"/>
</dbReference>
<dbReference type="PROSITE" id="PS01295">
    <property type="entry name" value="ISPD"/>
    <property type="match status" value="1"/>
</dbReference>
<dbReference type="PROSITE" id="PS01350">
    <property type="entry name" value="ISPF"/>
    <property type="match status" value="1"/>
</dbReference>
<comment type="function">
    <text evidence="1">Bifunctional enzyme that catalyzes the formation of 4-diphosphocytidyl-2-C-methyl-D-erythritol from CTP and 2-C-methyl-D-erythritol 4-phosphate (MEP) (IspD), and catalyzes the conversion of 4-diphosphocytidyl-2-C-methyl-D-erythritol 2-phosphate (CDP-ME2P) to 2-C-methyl-D-erythritol 2,4-cyclodiphosphate (ME-CPP) with a corresponding release of cytidine 5-monophosphate (CMP) (IspF).</text>
</comment>
<comment type="catalytic activity">
    <reaction evidence="1">
        <text>2-C-methyl-D-erythritol 4-phosphate + CTP + H(+) = 4-CDP-2-C-methyl-D-erythritol + diphosphate</text>
        <dbReference type="Rhea" id="RHEA:13429"/>
        <dbReference type="ChEBI" id="CHEBI:15378"/>
        <dbReference type="ChEBI" id="CHEBI:33019"/>
        <dbReference type="ChEBI" id="CHEBI:37563"/>
        <dbReference type="ChEBI" id="CHEBI:57823"/>
        <dbReference type="ChEBI" id="CHEBI:58262"/>
        <dbReference type="EC" id="2.7.7.60"/>
    </reaction>
</comment>
<comment type="catalytic activity">
    <reaction evidence="1">
        <text>4-CDP-2-C-methyl-D-erythritol 2-phosphate = 2-C-methyl-D-erythritol 2,4-cyclic diphosphate + CMP</text>
        <dbReference type="Rhea" id="RHEA:23864"/>
        <dbReference type="ChEBI" id="CHEBI:57919"/>
        <dbReference type="ChEBI" id="CHEBI:58483"/>
        <dbReference type="ChEBI" id="CHEBI:60377"/>
        <dbReference type="EC" id="4.6.1.12"/>
    </reaction>
</comment>
<comment type="cofactor">
    <cofactor evidence="1">
        <name>a divalent metal cation</name>
        <dbReference type="ChEBI" id="CHEBI:60240"/>
    </cofactor>
</comment>
<comment type="pathway">
    <text evidence="1">Isoprenoid biosynthesis; isopentenyl diphosphate biosynthesis via DXP pathway; isopentenyl diphosphate from 1-deoxy-D-xylulose 5-phosphate: step 2/6.</text>
</comment>
<comment type="pathway">
    <text evidence="1">Isoprenoid biosynthesis; isopentenyl diphosphate biosynthesis via DXP pathway; isopentenyl diphosphate from 1-deoxy-D-xylulose 5-phosphate: step 4/6.</text>
</comment>
<comment type="similarity">
    <text evidence="1">In the N-terminal section; belongs to the IspD/TarI cytidylyltransferase family. IspD subfamily.</text>
</comment>
<comment type="similarity">
    <text evidence="1">In the C-terminal section; belongs to the IspF family.</text>
</comment>
<gene>
    <name evidence="1" type="primary">ispDF</name>
    <name type="ordered locus">Dvul_1625</name>
</gene>
<evidence type="ECO:0000255" key="1">
    <source>
        <dbReference type="HAMAP-Rule" id="MF_01520"/>
    </source>
</evidence>
<reference key="1">
    <citation type="journal article" date="2009" name="Environ. Microbiol.">
        <title>Contribution of mobile genetic elements to Desulfovibrio vulgaris genome plasticity.</title>
        <authorList>
            <person name="Walker C.B."/>
            <person name="Stolyar S."/>
            <person name="Chivian D."/>
            <person name="Pinel N."/>
            <person name="Gabster J.A."/>
            <person name="Dehal P.S."/>
            <person name="He Z."/>
            <person name="Yang Z.K."/>
            <person name="Yen H.C."/>
            <person name="Zhou J."/>
            <person name="Wall J.D."/>
            <person name="Hazen T.C."/>
            <person name="Arkin A.P."/>
            <person name="Stahl D.A."/>
        </authorList>
    </citation>
    <scope>NUCLEOTIDE SEQUENCE [LARGE SCALE GENOMIC DNA]</scope>
    <source>
        <strain>DP4</strain>
    </source>
</reference>
<accession>A1VDX6</accession>
<protein>
    <recommendedName>
        <fullName evidence="1">Bifunctional enzyme IspD/IspF</fullName>
    </recommendedName>
    <domain>
        <recommendedName>
            <fullName evidence="1">2-C-methyl-D-erythritol 4-phosphate cytidylyltransferase</fullName>
            <ecNumber evidence="1">2.7.7.60</ecNumber>
        </recommendedName>
        <alternativeName>
            <fullName evidence="1">4-diphosphocytidyl-2C-methyl-D-erythritol synthase</fullName>
        </alternativeName>
        <alternativeName>
            <fullName evidence="1">MEP cytidylyltransferase</fullName>
            <shortName evidence="1">MCT</shortName>
        </alternativeName>
    </domain>
    <domain>
        <recommendedName>
            <fullName evidence="1">2-C-methyl-D-erythritol 2,4-cyclodiphosphate synthase</fullName>
            <shortName evidence="1">MECDP-synthase</shortName>
            <shortName evidence="1">MECPP-synthase</shortName>
            <shortName evidence="1">MECPS</shortName>
            <ecNumber evidence="1">4.6.1.12</ecNumber>
        </recommendedName>
    </domain>
</protein>
<name>ISPDF_NITV4</name>
<organism>
    <name type="scientific">Nitratidesulfovibrio vulgaris (strain DP4)</name>
    <name type="common">Desulfovibrio vulgaris</name>
    <dbReference type="NCBI Taxonomy" id="391774"/>
    <lineage>
        <taxon>Bacteria</taxon>
        <taxon>Pseudomonadati</taxon>
        <taxon>Thermodesulfobacteriota</taxon>
        <taxon>Desulfovibrionia</taxon>
        <taxon>Desulfovibrionales</taxon>
        <taxon>Desulfovibrionaceae</taxon>
        <taxon>Nitratidesulfovibrio</taxon>
    </lineage>
</organism>
<keyword id="KW-0414">Isoprene biosynthesis</keyword>
<keyword id="KW-0456">Lyase</keyword>
<keyword id="KW-0479">Metal-binding</keyword>
<keyword id="KW-0511">Multifunctional enzyme</keyword>
<keyword id="KW-0548">Nucleotidyltransferase</keyword>
<keyword id="KW-0808">Transferase</keyword>
<feature type="chain" id="PRO_0000296744" description="Bifunctional enzyme IspD/IspF">
    <location>
        <begin position="1"/>
        <end position="395"/>
    </location>
</feature>
<feature type="region of interest" description="2-C-methyl-D-erythritol 4-phosphate cytidylyltransferase" evidence="1">
    <location>
        <begin position="1"/>
        <end position="237"/>
    </location>
</feature>
<feature type="region of interest" description="2-C-methyl-D-erythritol 2,4-cyclodiphosphate synthase" evidence="1">
    <location>
        <begin position="238"/>
        <end position="395"/>
    </location>
</feature>
<feature type="binding site" evidence="1">
    <location>
        <begin position="244"/>
        <end position="246"/>
    </location>
    <ligand>
        <name>4-CDP-2-C-methyl-D-erythritol 2-phosphate</name>
        <dbReference type="ChEBI" id="CHEBI:57919"/>
    </ligand>
</feature>
<feature type="binding site" evidence="1">
    <location>
        <position position="244"/>
    </location>
    <ligand>
        <name>a divalent metal cation</name>
        <dbReference type="ChEBI" id="CHEBI:60240"/>
    </ligand>
</feature>
<feature type="binding site" evidence="1">
    <location>
        <position position="246"/>
    </location>
    <ligand>
        <name>a divalent metal cation</name>
        <dbReference type="ChEBI" id="CHEBI:60240"/>
    </ligand>
</feature>
<feature type="binding site" evidence="1">
    <location>
        <begin position="270"/>
        <end position="271"/>
    </location>
    <ligand>
        <name>4-CDP-2-C-methyl-D-erythritol 2-phosphate</name>
        <dbReference type="ChEBI" id="CHEBI:57919"/>
    </ligand>
</feature>
<feature type="binding site" evidence="1">
    <location>
        <position position="278"/>
    </location>
    <ligand>
        <name>a divalent metal cation</name>
        <dbReference type="ChEBI" id="CHEBI:60240"/>
    </ligand>
</feature>
<feature type="binding site" evidence="1">
    <location>
        <begin position="292"/>
        <end position="294"/>
    </location>
    <ligand>
        <name>4-CDP-2-C-methyl-D-erythritol 2-phosphate</name>
        <dbReference type="ChEBI" id="CHEBI:57919"/>
    </ligand>
</feature>
<feature type="binding site" evidence="1">
    <location>
        <begin position="297"/>
        <end position="301"/>
    </location>
    <ligand>
        <name>4-CDP-2-C-methyl-D-erythritol 2-phosphate</name>
        <dbReference type="ChEBI" id="CHEBI:57919"/>
    </ligand>
</feature>
<feature type="binding site" evidence="1">
    <location>
        <begin position="368"/>
        <end position="371"/>
    </location>
    <ligand>
        <name>4-CDP-2-C-methyl-D-erythritol 2-phosphate</name>
        <dbReference type="ChEBI" id="CHEBI:57919"/>
    </ligand>
</feature>
<feature type="binding site" evidence="1">
    <location>
        <position position="375"/>
    </location>
    <ligand>
        <name>4-CDP-2-C-methyl-D-erythritol 2-phosphate</name>
        <dbReference type="ChEBI" id="CHEBI:57919"/>
    </ligand>
</feature>
<feature type="site" description="Transition state stabilizer" evidence="1">
    <location>
        <position position="15"/>
    </location>
</feature>
<feature type="site" description="Transition state stabilizer" evidence="1">
    <location>
        <position position="25"/>
    </location>
</feature>
<feature type="site" description="Positions MEP for the nucleophilic attack" evidence="1">
    <location>
        <position position="161"/>
    </location>
</feature>
<feature type="site" description="Positions MEP for the nucleophilic attack" evidence="1">
    <location>
        <position position="217"/>
    </location>
</feature>
<feature type="site" description="Transition state stabilizer" evidence="1">
    <location>
        <position position="270"/>
    </location>
</feature>
<feature type="site" description="Transition state stabilizer" evidence="1">
    <location>
        <position position="369"/>
    </location>
</feature>
<proteinExistence type="inferred from homology"/>
<sequence length="395" mass="41726">MRTWVLLLAAGSGTRLATAGLPDAKQFLPLHGAPLYWASARTMAHVAGIEGIVFVFPPHRVEEERARISALDDGSVLGLDWHVVGGGAARQDSVACGLAALPRSCEAVLVHDAARPFASPALVARVLSALHDGHAGVVPGIPLTDTVKETTDGFVANTPDRSRLVAVQTPQGFTLKALSTAHETARTAGWNVTDDAALLERCGIPVRIVAGEVVNAKITTPEDLAMLDANEPQVTVPCVGWGYDVHRYGEGRPMKLGGVLIPEGPEVVAHSDGDVLLHALADALLGCIGAGDIGLHFPDSDAAFDNANSAMLLDRVLHMTHEARLRLTHVDLTIVAQVPKLSPWRDKIRANVARLLDLPVTSVNFKATTEEGLGFTGEKRGIKAIAAVTGLRPMP</sequence>